<evidence type="ECO:0000250" key="1">
    <source>
        <dbReference type="UniProtKB" id="Q96HA8"/>
    </source>
</evidence>
<evidence type="ECO:0000269" key="2">
    <source>
    </source>
</evidence>
<evidence type="ECO:0000305" key="3"/>
<protein>
    <recommendedName>
        <fullName evidence="3">Protein N-terminal glutamine amidohydrolase</fullName>
        <ecNumber evidence="2">3.5.1.122</ecNumber>
    </recommendedName>
    <alternativeName>
        <fullName>Protein NH2-terminal glutamine deamidase</fullName>
        <shortName>N-terminal Gln amidase</shortName>
        <shortName>Nt(Q)-amidase</shortName>
    </alternativeName>
    <alternativeName>
        <fullName>WDYHV motif-containing protein 1</fullName>
    </alternativeName>
</protein>
<reference key="1">
    <citation type="journal article" date="2005" name="Science">
        <title>The transcriptional landscape of the mammalian genome.</title>
        <authorList>
            <person name="Carninci P."/>
            <person name="Kasukawa T."/>
            <person name="Katayama S."/>
            <person name="Gough J."/>
            <person name="Frith M.C."/>
            <person name="Maeda N."/>
            <person name="Oyama R."/>
            <person name="Ravasi T."/>
            <person name="Lenhard B."/>
            <person name="Wells C."/>
            <person name="Kodzius R."/>
            <person name="Shimokawa K."/>
            <person name="Bajic V.B."/>
            <person name="Brenner S.E."/>
            <person name="Batalov S."/>
            <person name="Forrest A.R."/>
            <person name="Zavolan M."/>
            <person name="Davis M.J."/>
            <person name="Wilming L.G."/>
            <person name="Aidinis V."/>
            <person name="Allen J.E."/>
            <person name="Ambesi-Impiombato A."/>
            <person name="Apweiler R."/>
            <person name="Aturaliya R.N."/>
            <person name="Bailey T.L."/>
            <person name="Bansal M."/>
            <person name="Baxter L."/>
            <person name="Beisel K.W."/>
            <person name="Bersano T."/>
            <person name="Bono H."/>
            <person name="Chalk A.M."/>
            <person name="Chiu K.P."/>
            <person name="Choudhary V."/>
            <person name="Christoffels A."/>
            <person name="Clutterbuck D.R."/>
            <person name="Crowe M.L."/>
            <person name="Dalla E."/>
            <person name="Dalrymple B.P."/>
            <person name="de Bono B."/>
            <person name="Della Gatta G."/>
            <person name="di Bernardo D."/>
            <person name="Down T."/>
            <person name="Engstrom P."/>
            <person name="Fagiolini M."/>
            <person name="Faulkner G."/>
            <person name="Fletcher C.F."/>
            <person name="Fukushima T."/>
            <person name="Furuno M."/>
            <person name="Futaki S."/>
            <person name="Gariboldi M."/>
            <person name="Georgii-Hemming P."/>
            <person name="Gingeras T.R."/>
            <person name="Gojobori T."/>
            <person name="Green R.E."/>
            <person name="Gustincich S."/>
            <person name="Harbers M."/>
            <person name="Hayashi Y."/>
            <person name="Hensch T.K."/>
            <person name="Hirokawa N."/>
            <person name="Hill D."/>
            <person name="Huminiecki L."/>
            <person name="Iacono M."/>
            <person name="Ikeo K."/>
            <person name="Iwama A."/>
            <person name="Ishikawa T."/>
            <person name="Jakt M."/>
            <person name="Kanapin A."/>
            <person name="Katoh M."/>
            <person name="Kawasawa Y."/>
            <person name="Kelso J."/>
            <person name="Kitamura H."/>
            <person name="Kitano H."/>
            <person name="Kollias G."/>
            <person name="Krishnan S.P."/>
            <person name="Kruger A."/>
            <person name="Kummerfeld S.K."/>
            <person name="Kurochkin I.V."/>
            <person name="Lareau L.F."/>
            <person name="Lazarevic D."/>
            <person name="Lipovich L."/>
            <person name="Liu J."/>
            <person name="Liuni S."/>
            <person name="McWilliam S."/>
            <person name="Madan Babu M."/>
            <person name="Madera M."/>
            <person name="Marchionni L."/>
            <person name="Matsuda H."/>
            <person name="Matsuzawa S."/>
            <person name="Miki H."/>
            <person name="Mignone F."/>
            <person name="Miyake S."/>
            <person name="Morris K."/>
            <person name="Mottagui-Tabar S."/>
            <person name="Mulder N."/>
            <person name="Nakano N."/>
            <person name="Nakauchi H."/>
            <person name="Ng P."/>
            <person name="Nilsson R."/>
            <person name="Nishiguchi S."/>
            <person name="Nishikawa S."/>
            <person name="Nori F."/>
            <person name="Ohara O."/>
            <person name="Okazaki Y."/>
            <person name="Orlando V."/>
            <person name="Pang K.C."/>
            <person name="Pavan W.J."/>
            <person name="Pavesi G."/>
            <person name="Pesole G."/>
            <person name="Petrovsky N."/>
            <person name="Piazza S."/>
            <person name="Reed J."/>
            <person name="Reid J.F."/>
            <person name="Ring B.Z."/>
            <person name="Ringwald M."/>
            <person name="Rost B."/>
            <person name="Ruan Y."/>
            <person name="Salzberg S.L."/>
            <person name="Sandelin A."/>
            <person name="Schneider C."/>
            <person name="Schoenbach C."/>
            <person name="Sekiguchi K."/>
            <person name="Semple C.A."/>
            <person name="Seno S."/>
            <person name="Sessa L."/>
            <person name="Sheng Y."/>
            <person name="Shibata Y."/>
            <person name="Shimada H."/>
            <person name="Shimada K."/>
            <person name="Silva D."/>
            <person name="Sinclair B."/>
            <person name="Sperling S."/>
            <person name="Stupka E."/>
            <person name="Sugiura K."/>
            <person name="Sultana R."/>
            <person name="Takenaka Y."/>
            <person name="Taki K."/>
            <person name="Tammoja K."/>
            <person name="Tan S.L."/>
            <person name="Tang S."/>
            <person name="Taylor M.S."/>
            <person name="Tegner J."/>
            <person name="Teichmann S.A."/>
            <person name="Ueda H.R."/>
            <person name="van Nimwegen E."/>
            <person name="Verardo R."/>
            <person name="Wei C.L."/>
            <person name="Yagi K."/>
            <person name="Yamanishi H."/>
            <person name="Zabarovsky E."/>
            <person name="Zhu S."/>
            <person name="Zimmer A."/>
            <person name="Hide W."/>
            <person name="Bult C."/>
            <person name="Grimmond S.M."/>
            <person name="Teasdale R.D."/>
            <person name="Liu E.T."/>
            <person name="Brusic V."/>
            <person name="Quackenbush J."/>
            <person name="Wahlestedt C."/>
            <person name="Mattick J.S."/>
            <person name="Hume D.A."/>
            <person name="Kai C."/>
            <person name="Sasaki D."/>
            <person name="Tomaru Y."/>
            <person name="Fukuda S."/>
            <person name="Kanamori-Katayama M."/>
            <person name="Suzuki M."/>
            <person name="Aoki J."/>
            <person name="Arakawa T."/>
            <person name="Iida J."/>
            <person name="Imamura K."/>
            <person name="Itoh M."/>
            <person name="Kato T."/>
            <person name="Kawaji H."/>
            <person name="Kawagashira N."/>
            <person name="Kawashima T."/>
            <person name="Kojima M."/>
            <person name="Kondo S."/>
            <person name="Konno H."/>
            <person name="Nakano K."/>
            <person name="Ninomiya N."/>
            <person name="Nishio T."/>
            <person name="Okada M."/>
            <person name="Plessy C."/>
            <person name="Shibata K."/>
            <person name="Shiraki T."/>
            <person name="Suzuki S."/>
            <person name="Tagami M."/>
            <person name="Waki K."/>
            <person name="Watahiki A."/>
            <person name="Okamura-Oho Y."/>
            <person name="Suzuki H."/>
            <person name="Kawai J."/>
            <person name="Hayashizaki Y."/>
        </authorList>
    </citation>
    <scope>NUCLEOTIDE SEQUENCE [LARGE SCALE MRNA]</scope>
    <source>
        <strain>C57BL/6J</strain>
        <tissue>Bone marrow</tissue>
    </source>
</reference>
<reference key="2">
    <citation type="journal article" date="2004" name="Genome Res.">
        <title>The status, quality, and expansion of the NIH full-length cDNA project: the Mammalian Gene Collection (MGC).</title>
        <authorList>
            <consortium name="The MGC Project Team"/>
        </authorList>
    </citation>
    <scope>NUCLEOTIDE SEQUENCE [LARGE SCALE MRNA]</scope>
    <source>
        <tissue>Mammary gland</tissue>
    </source>
</reference>
<reference key="3">
    <citation type="journal article" date="2009" name="Mol. Cell">
        <title>Glutamine-specific N-terminal amidase, a component of the N-end rule pathway.</title>
        <authorList>
            <person name="Wang H."/>
            <person name="Piatkov K.I."/>
            <person name="Brower C.S."/>
            <person name="Varshavsky A."/>
        </authorList>
    </citation>
    <scope>FUNCTION</scope>
    <scope>CATALYTIC ACTIVITY</scope>
    <scope>SUBCELLULAR LOCATION</scope>
    <scope>TISSUE SPECIFICITY</scope>
    <scope>MUTAGENESIS OF CYS-23; CYS-28; CYS-30; CYS-38; GLU-39; ASP-81; HIS-83 AND ASP-147</scope>
</reference>
<reference key="4">
    <citation type="journal article" date="2010" name="Cell">
        <title>A tissue-specific atlas of mouse protein phosphorylation and expression.</title>
        <authorList>
            <person name="Huttlin E.L."/>
            <person name="Jedrychowski M.P."/>
            <person name="Elias J.E."/>
            <person name="Goswami T."/>
            <person name="Rad R."/>
            <person name="Beausoleil S.A."/>
            <person name="Villen J."/>
            <person name="Haas W."/>
            <person name="Sowa M.E."/>
            <person name="Gygi S.P."/>
        </authorList>
    </citation>
    <scope>IDENTIFICATION BY MASS SPECTROMETRY [LARGE SCALE ANALYSIS]</scope>
    <source>
        <tissue>Pancreas</tissue>
    </source>
</reference>
<keyword id="KW-0963">Cytoplasm</keyword>
<keyword id="KW-0378">Hydrolase</keyword>
<keyword id="KW-0539">Nucleus</keyword>
<keyword id="KW-1185">Reference proteome</keyword>
<dbReference type="EC" id="3.5.1.122" evidence="2"/>
<dbReference type="EMBL" id="AK150578">
    <property type="protein sequence ID" value="BAE29673.1"/>
    <property type="molecule type" value="mRNA"/>
</dbReference>
<dbReference type="EMBL" id="BC051524">
    <property type="protein sequence ID" value="AAH51524.1"/>
    <property type="molecule type" value="mRNA"/>
</dbReference>
<dbReference type="CCDS" id="CCDS27490.1"/>
<dbReference type="RefSeq" id="NP_084010.1">
    <property type="nucleotide sequence ID" value="NM_029734.2"/>
</dbReference>
<dbReference type="SMR" id="Q80WB5"/>
<dbReference type="BioGRID" id="218305">
    <property type="interactions" value="18"/>
</dbReference>
<dbReference type="FunCoup" id="Q80WB5">
    <property type="interactions" value="3412"/>
</dbReference>
<dbReference type="STRING" id="10090.ENSMUSP00000064622"/>
<dbReference type="PhosphoSitePlus" id="Q80WB5"/>
<dbReference type="PaxDb" id="10090-ENSMUSP00000064622"/>
<dbReference type="PeptideAtlas" id="Q80WB5"/>
<dbReference type="ProteomicsDB" id="293754"/>
<dbReference type="Pumba" id="Q80WB5"/>
<dbReference type="Antibodypedia" id="13855">
    <property type="antibodies" value="63 antibodies from 17 providers"/>
</dbReference>
<dbReference type="DNASU" id="76773"/>
<dbReference type="Ensembl" id="ENSMUST00000067563.9">
    <property type="protein sequence ID" value="ENSMUSP00000064622.8"/>
    <property type="gene ID" value="ENSMUSG00000022359.11"/>
</dbReference>
<dbReference type="GeneID" id="76773"/>
<dbReference type="KEGG" id="mmu:76773"/>
<dbReference type="UCSC" id="uc007vti.1">
    <property type="organism name" value="mouse"/>
</dbReference>
<dbReference type="AGR" id="MGI:1924023"/>
<dbReference type="CTD" id="55093"/>
<dbReference type="MGI" id="MGI:1924023">
    <property type="gene designation" value="Ntaq1"/>
</dbReference>
<dbReference type="VEuPathDB" id="HostDB:ENSMUSG00000022359"/>
<dbReference type="eggNOG" id="KOG3261">
    <property type="taxonomic scope" value="Eukaryota"/>
</dbReference>
<dbReference type="GeneTree" id="ENSGT00390000014398"/>
<dbReference type="HOGENOM" id="CLU_091083_1_0_1"/>
<dbReference type="InParanoid" id="Q80WB5"/>
<dbReference type="OMA" id="GWGTVYS"/>
<dbReference type="OrthoDB" id="191192at2759"/>
<dbReference type="PhylomeDB" id="Q80WB5"/>
<dbReference type="TreeFam" id="TF105807"/>
<dbReference type="BRENDA" id="3.5.1.122">
    <property type="organism ID" value="3474"/>
</dbReference>
<dbReference type="BioGRID-ORCS" id="76773">
    <property type="hits" value="1 hit in 65 CRISPR screens"/>
</dbReference>
<dbReference type="ChiTaRS" id="Wdyhv1">
    <property type="organism name" value="mouse"/>
</dbReference>
<dbReference type="PRO" id="PR:Q80WB5"/>
<dbReference type="Proteomes" id="UP000000589">
    <property type="component" value="Chromosome 15"/>
</dbReference>
<dbReference type="RNAct" id="Q80WB5">
    <property type="molecule type" value="protein"/>
</dbReference>
<dbReference type="Bgee" id="ENSMUSG00000022359">
    <property type="expression patterns" value="Expressed in bone marrow and 64 other cell types or tissues"/>
</dbReference>
<dbReference type="ExpressionAtlas" id="Q80WB5">
    <property type="expression patterns" value="baseline and differential"/>
</dbReference>
<dbReference type="GO" id="GO:0005829">
    <property type="term" value="C:cytosol"/>
    <property type="evidence" value="ECO:0000314"/>
    <property type="project" value="UniProtKB"/>
</dbReference>
<dbReference type="GO" id="GO:0005634">
    <property type="term" value="C:nucleus"/>
    <property type="evidence" value="ECO:0000314"/>
    <property type="project" value="UniProtKB"/>
</dbReference>
<dbReference type="GO" id="GO:0008418">
    <property type="term" value="F:protein-N-terminal asparagine amidohydrolase activity"/>
    <property type="evidence" value="ECO:0007669"/>
    <property type="project" value="InterPro"/>
</dbReference>
<dbReference type="GO" id="GO:0070773">
    <property type="term" value="F:protein-N-terminal glutamine amidohydrolase activity"/>
    <property type="evidence" value="ECO:0000314"/>
    <property type="project" value="UniProtKB"/>
</dbReference>
<dbReference type="GO" id="GO:0030163">
    <property type="term" value="P:protein catabolic process"/>
    <property type="evidence" value="ECO:0000303"/>
    <property type="project" value="UniProtKB"/>
</dbReference>
<dbReference type="GO" id="GO:0036211">
    <property type="term" value="P:protein modification process"/>
    <property type="evidence" value="ECO:0000314"/>
    <property type="project" value="UniProtKB"/>
</dbReference>
<dbReference type="FunFam" id="3.10.620.10:FF:000001">
    <property type="entry name" value="Blast:Protein N-terminal glutamine amidohydrolase"/>
    <property type="match status" value="1"/>
</dbReference>
<dbReference type="Gene3D" id="3.10.620.10">
    <property type="entry name" value="Protein N-terminal glutamine amidohydrolase, alpha beta roll"/>
    <property type="match status" value="1"/>
</dbReference>
<dbReference type="InterPro" id="IPR037132">
    <property type="entry name" value="N_Gln_amidohydro_ab_roll_sf"/>
</dbReference>
<dbReference type="InterPro" id="IPR039733">
    <property type="entry name" value="NTAQ1"/>
</dbReference>
<dbReference type="InterPro" id="IPR023128">
    <property type="entry name" value="Prot_N_Gln_amidohydro_ab_roll"/>
</dbReference>
<dbReference type="PANTHER" id="PTHR13035">
    <property type="entry name" value="PROTEIN N-TERMINAL GLUTAMINE AMIDOHYDROLASE"/>
    <property type="match status" value="1"/>
</dbReference>
<dbReference type="PANTHER" id="PTHR13035:SF0">
    <property type="entry name" value="PROTEIN N-TERMINAL GLUTAMINE AMIDOHYDROLASE"/>
    <property type="match status" value="1"/>
</dbReference>
<dbReference type="Pfam" id="PF09764">
    <property type="entry name" value="Nt_Gln_amidase"/>
    <property type="match status" value="1"/>
</dbReference>
<name>NTAQ1_MOUSE</name>
<proteinExistence type="evidence at protein level"/>
<accession>Q80WB5</accession>
<organism>
    <name type="scientific">Mus musculus</name>
    <name type="common">Mouse</name>
    <dbReference type="NCBI Taxonomy" id="10090"/>
    <lineage>
        <taxon>Eukaryota</taxon>
        <taxon>Metazoa</taxon>
        <taxon>Chordata</taxon>
        <taxon>Craniata</taxon>
        <taxon>Vertebrata</taxon>
        <taxon>Euteleostomi</taxon>
        <taxon>Mammalia</taxon>
        <taxon>Eutheria</taxon>
        <taxon>Euarchontoglires</taxon>
        <taxon>Glires</taxon>
        <taxon>Rodentia</taxon>
        <taxon>Myomorpha</taxon>
        <taxon>Muroidea</taxon>
        <taxon>Muridae</taxon>
        <taxon>Murinae</taxon>
        <taxon>Mus</taxon>
        <taxon>Mus</taxon>
    </lineage>
</organism>
<feature type="chain" id="PRO_0000279410" description="Protein N-terminal glutamine amidohydrolase">
    <location>
        <begin position="1"/>
        <end position="209"/>
    </location>
</feature>
<feature type="active site" evidence="3">
    <location>
        <position position="30"/>
    </location>
</feature>
<feature type="active site" evidence="3">
    <location>
        <position position="83"/>
    </location>
</feature>
<feature type="active site" evidence="3">
    <location>
        <position position="99"/>
    </location>
</feature>
<feature type="mutagenesis site" description="Does not strongly affect N-terminal glutamine amidohydrolase activity." evidence="2">
    <original>C</original>
    <variation>A</variation>
    <location>
        <position position="23"/>
    </location>
</feature>
<feature type="mutagenesis site" description="Does not strongly affect N-terminal glutamine amidohydrolase activity." evidence="2">
    <original>C</original>
    <variation>A</variation>
    <location>
        <position position="28"/>
    </location>
</feature>
<feature type="mutagenesis site" description="Loss of N-terminal glutamine amidohydrolase activity." evidence="2">
    <original>C</original>
    <variation>A</variation>
    <location>
        <position position="30"/>
    </location>
</feature>
<feature type="mutagenesis site" description="Does not strongly affect N-terminal glutamine amidohydrolase activity." evidence="2">
    <original>C</original>
    <variation>A</variation>
    <location>
        <position position="38"/>
    </location>
</feature>
<feature type="mutagenesis site" description="Does not strongly affect N-terminal glutamine amidohydrolase activity." evidence="2">
    <original>E</original>
    <variation>Q</variation>
    <location>
        <position position="39"/>
    </location>
</feature>
<feature type="mutagenesis site" description="Impaired N-terminal glutamine amidohydrolase activity." evidence="2">
    <original>D</original>
    <variation>N</variation>
    <location>
        <position position="81"/>
    </location>
</feature>
<feature type="mutagenesis site" description="Loss of N-terminal glutamine amidohydrolase activity." evidence="2">
    <original>H</original>
    <variation>A</variation>
    <location>
        <position position="83"/>
    </location>
</feature>
<feature type="mutagenesis site" description="Does not strongly affect N-terminal glutamine amidohydrolase activity." evidence="2">
    <original>D</original>
    <variation>N</variation>
    <location>
        <position position="147"/>
    </location>
</feature>
<sequence length="209" mass="24337">MEGDGPAATAPQYQPVCPTRDACVYNSCYCEENIWKLCEYIKTHNQYLLEECYAVFISNEKKMVPIWKQQARPENGPVIWDYHVVLLHVSREGQSFIYDLDTILPFPCPFDIYIEDALKSDDDIHLQFRRKFRVVRADSYLKHFASDRSHMKDSSGNWREPPPEYPCIETGDSKMNLNDFISMDPAVGWGAVYTLPEFVHRFSSKTYQA</sequence>
<gene>
    <name type="primary">Ntaq1</name>
    <name type="synonym">Wdyhv1</name>
</gene>
<comment type="function">
    <text evidence="2">Mediates the side-chain deamidation of N-terminal glutamine residues to glutamate, an important step in N-end rule pathway of protein degradation. Conversion of the resulting N-terminal glutamine to glutamate renders the protein susceptible to arginylation, polyubiquitination and degradation as specified by the N-end rule. Does not act on substrates with internal or C-terminal glutamine and does not act on non-glutamine residues in any position. Does not deaminate acetylated N-terminal glutamine. With the exception of proline, all tested second-position residues on substrate peptides do not greatly influence the activity. In contrast, a proline at position 2, virtually abolishes deamidation of N-terminal glutamine.</text>
</comment>
<comment type="catalytic activity">
    <reaction evidence="2">
        <text>N-terminal L-glutaminyl-[protein] + H2O = N-terminal L-glutamyl-[protein] + NH4(+)</text>
        <dbReference type="Rhea" id="RHEA:50680"/>
        <dbReference type="Rhea" id="RHEA-COMP:12668"/>
        <dbReference type="Rhea" id="RHEA-COMP:12777"/>
        <dbReference type="ChEBI" id="CHEBI:15377"/>
        <dbReference type="ChEBI" id="CHEBI:28938"/>
        <dbReference type="ChEBI" id="CHEBI:64721"/>
        <dbReference type="ChEBI" id="CHEBI:64722"/>
        <dbReference type="EC" id="3.5.1.122"/>
    </reaction>
</comment>
<comment type="subunit">
    <text evidence="1">Monomer.</text>
</comment>
<comment type="subcellular location">
    <subcellularLocation>
        <location evidence="2">Cytoplasm</location>
        <location evidence="2">Cytosol</location>
    </subcellularLocation>
    <subcellularLocation>
        <location evidence="2">Nucleus</location>
    </subcellularLocation>
</comment>
<comment type="tissue specificity">
    <text evidence="2">Widely expressed.</text>
</comment>
<comment type="similarity">
    <text evidence="3">Belongs to the NTAQ1 family.</text>
</comment>